<organism>
    <name type="scientific">Shigella flexneri</name>
    <dbReference type="NCBI Taxonomy" id="623"/>
    <lineage>
        <taxon>Bacteria</taxon>
        <taxon>Pseudomonadati</taxon>
        <taxon>Pseudomonadota</taxon>
        <taxon>Gammaproteobacteria</taxon>
        <taxon>Enterobacterales</taxon>
        <taxon>Enterobacteriaceae</taxon>
        <taxon>Shigella</taxon>
    </lineage>
</organism>
<reference key="1">
    <citation type="journal article" date="2002" name="Nucleic Acids Res.">
        <title>Genome sequence of Shigella flexneri 2a: insights into pathogenicity through comparison with genomes of Escherichia coli K12 and O157.</title>
        <authorList>
            <person name="Jin Q."/>
            <person name="Yuan Z."/>
            <person name="Xu J."/>
            <person name="Wang Y."/>
            <person name="Shen Y."/>
            <person name="Lu W."/>
            <person name="Wang J."/>
            <person name="Liu H."/>
            <person name="Yang J."/>
            <person name="Yang F."/>
            <person name="Zhang X."/>
            <person name="Zhang J."/>
            <person name="Yang G."/>
            <person name="Wu H."/>
            <person name="Qu D."/>
            <person name="Dong J."/>
            <person name="Sun L."/>
            <person name="Xue Y."/>
            <person name="Zhao A."/>
            <person name="Gao Y."/>
            <person name="Zhu J."/>
            <person name="Kan B."/>
            <person name="Ding K."/>
            <person name="Chen S."/>
            <person name="Cheng H."/>
            <person name="Yao Z."/>
            <person name="He B."/>
            <person name="Chen R."/>
            <person name="Ma D."/>
            <person name="Qiang B."/>
            <person name="Wen Y."/>
            <person name="Hou Y."/>
            <person name="Yu J."/>
        </authorList>
    </citation>
    <scope>NUCLEOTIDE SEQUENCE [LARGE SCALE GENOMIC DNA]</scope>
    <source>
        <strain>301 / Serotype 2a</strain>
    </source>
</reference>
<reference key="2">
    <citation type="journal article" date="2003" name="Infect. Immun.">
        <title>Complete genome sequence and comparative genomics of Shigella flexneri serotype 2a strain 2457T.</title>
        <authorList>
            <person name="Wei J."/>
            <person name="Goldberg M.B."/>
            <person name="Burland V."/>
            <person name="Venkatesan M.M."/>
            <person name="Deng W."/>
            <person name="Fournier G."/>
            <person name="Mayhew G.F."/>
            <person name="Plunkett G. III"/>
            <person name="Rose D.J."/>
            <person name="Darling A."/>
            <person name="Mau B."/>
            <person name="Perna N.T."/>
            <person name="Payne S.M."/>
            <person name="Runyen-Janecky L.J."/>
            <person name="Zhou S."/>
            <person name="Schwartz D.C."/>
            <person name="Blattner F.R."/>
        </authorList>
    </citation>
    <scope>NUCLEOTIDE SEQUENCE [LARGE SCALE GENOMIC DNA]</scope>
    <source>
        <strain>ATCC 700930 / 2457T / Serotype 2a</strain>
    </source>
</reference>
<protein>
    <recommendedName>
        <fullName evidence="1">Dephospho-CoA kinase</fullName>
        <ecNumber evidence="1">2.7.1.24</ecNumber>
    </recommendedName>
    <alternativeName>
        <fullName evidence="1">Dephosphocoenzyme A kinase</fullName>
    </alternativeName>
</protein>
<name>COAE_SHIFL</name>
<evidence type="ECO:0000255" key="1">
    <source>
        <dbReference type="HAMAP-Rule" id="MF_00376"/>
    </source>
</evidence>
<dbReference type="EC" id="2.7.1.24" evidence="1"/>
<dbReference type="EMBL" id="AE005674">
    <property type="protein sequence ID" value="AAN41765.1"/>
    <property type="molecule type" value="Genomic_DNA"/>
</dbReference>
<dbReference type="EMBL" id="AE014073">
    <property type="protein sequence ID" value="AAP15646.1"/>
    <property type="molecule type" value="Genomic_DNA"/>
</dbReference>
<dbReference type="RefSeq" id="NP_706058.1">
    <property type="nucleotide sequence ID" value="NC_004337.2"/>
</dbReference>
<dbReference type="RefSeq" id="WP_000540596.1">
    <property type="nucleotide sequence ID" value="NZ_WPGW01000007.1"/>
</dbReference>
<dbReference type="SMR" id="Q7C397"/>
<dbReference type="STRING" id="198214.SF0100"/>
<dbReference type="PaxDb" id="198214-SF0100"/>
<dbReference type="GeneID" id="1024517"/>
<dbReference type="KEGG" id="sfl:SF0100"/>
<dbReference type="KEGG" id="sfx:S0102"/>
<dbReference type="PATRIC" id="fig|198214.7.peg.114"/>
<dbReference type="HOGENOM" id="CLU_057180_1_2_6"/>
<dbReference type="UniPathway" id="UPA00241">
    <property type="reaction ID" value="UER00356"/>
</dbReference>
<dbReference type="Proteomes" id="UP000001006">
    <property type="component" value="Chromosome"/>
</dbReference>
<dbReference type="Proteomes" id="UP000002673">
    <property type="component" value="Chromosome"/>
</dbReference>
<dbReference type="GO" id="GO:0005737">
    <property type="term" value="C:cytoplasm"/>
    <property type="evidence" value="ECO:0007669"/>
    <property type="project" value="UniProtKB-SubCell"/>
</dbReference>
<dbReference type="GO" id="GO:0005524">
    <property type="term" value="F:ATP binding"/>
    <property type="evidence" value="ECO:0007669"/>
    <property type="project" value="UniProtKB-UniRule"/>
</dbReference>
<dbReference type="GO" id="GO:0004140">
    <property type="term" value="F:dephospho-CoA kinase activity"/>
    <property type="evidence" value="ECO:0007669"/>
    <property type="project" value="UniProtKB-UniRule"/>
</dbReference>
<dbReference type="GO" id="GO:0015937">
    <property type="term" value="P:coenzyme A biosynthetic process"/>
    <property type="evidence" value="ECO:0007669"/>
    <property type="project" value="UniProtKB-UniRule"/>
</dbReference>
<dbReference type="CDD" id="cd02022">
    <property type="entry name" value="DPCK"/>
    <property type="match status" value="1"/>
</dbReference>
<dbReference type="FunFam" id="3.40.50.300:FF:000518">
    <property type="entry name" value="Dephospho-CoA kinase"/>
    <property type="match status" value="1"/>
</dbReference>
<dbReference type="Gene3D" id="3.40.50.300">
    <property type="entry name" value="P-loop containing nucleotide triphosphate hydrolases"/>
    <property type="match status" value="1"/>
</dbReference>
<dbReference type="HAMAP" id="MF_00376">
    <property type="entry name" value="Dephospho_CoA_kinase"/>
    <property type="match status" value="1"/>
</dbReference>
<dbReference type="InterPro" id="IPR001977">
    <property type="entry name" value="Depp_CoAkinase"/>
</dbReference>
<dbReference type="InterPro" id="IPR027417">
    <property type="entry name" value="P-loop_NTPase"/>
</dbReference>
<dbReference type="NCBIfam" id="TIGR00152">
    <property type="entry name" value="dephospho-CoA kinase"/>
    <property type="match status" value="1"/>
</dbReference>
<dbReference type="PANTHER" id="PTHR10695:SF46">
    <property type="entry name" value="BIFUNCTIONAL COENZYME A SYNTHASE-RELATED"/>
    <property type="match status" value="1"/>
</dbReference>
<dbReference type="PANTHER" id="PTHR10695">
    <property type="entry name" value="DEPHOSPHO-COA KINASE-RELATED"/>
    <property type="match status" value="1"/>
</dbReference>
<dbReference type="Pfam" id="PF01121">
    <property type="entry name" value="CoaE"/>
    <property type="match status" value="1"/>
</dbReference>
<dbReference type="SUPFAM" id="SSF52540">
    <property type="entry name" value="P-loop containing nucleoside triphosphate hydrolases"/>
    <property type="match status" value="1"/>
</dbReference>
<dbReference type="PROSITE" id="PS51219">
    <property type="entry name" value="DPCK"/>
    <property type="match status" value="1"/>
</dbReference>
<sequence length="206" mass="22625">MGYIVALTGGIGSGKSTVANAFADLGINVIDADIIARQVVEPGAPALHAIADHFGENMIAADGTLQRRALRERIFANPEEKNWLNDLLHPLIQQETQHQIQQATSPYVLWVVPLLVENSLYKKANRVLVVDVSPETQLKRTMQRDDVTREHVEQILAAQATREARLAVADDVIDNNGAPDAIASDVARLHAHYLQLASQFVSQEKP</sequence>
<comment type="function">
    <text evidence="1">Catalyzes the phosphorylation of the 3'-hydroxyl group of dephosphocoenzyme A to form coenzyme A.</text>
</comment>
<comment type="catalytic activity">
    <reaction evidence="1">
        <text>3'-dephospho-CoA + ATP = ADP + CoA + H(+)</text>
        <dbReference type="Rhea" id="RHEA:18245"/>
        <dbReference type="ChEBI" id="CHEBI:15378"/>
        <dbReference type="ChEBI" id="CHEBI:30616"/>
        <dbReference type="ChEBI" id="CHEBI:57287"/>
        <dbReference type="ChEBI" id="CHEBI:57328"/>
        <dbReference type="ChEBI" id="CHEBI:456216"/>
        <dbReference type="EC" id="2.7.1.24"/>
    </reaction>
</comment>
<comment type="pathway">
    <text evidence="1">Cofactor biosynthesis; coenzyme A biosynthesis; CoA from (R)-pantothenate: step 5/5.</text>
</comment>
<comment type="subcellular location">
    <subcellularLocation>
        <location evidence="1">Cytoplasm</location>
    </subcellularLocation>
</comment>
<comment type="similarity">
    <text evidence="1">Belongs to the CoaE family.</text>
</comment>
<proteinExistence type="inferred from homology"/>
<accession>Q7C397</accession>
<accession>Q83SN0</accession>
<gene>
    <name evidence="1" type="primary">coaE</name>
    <name type="ordered locus">SF0100</name>
    <name type="ordered locus">S0102</name>
</gene>
<feature type="chain" id="PRO_0000172996" description="Dephospho-CoA kinase">
    <location>
        <begin position="1"/>
        <end position="206"/>
    </location>
</feature>
<feature type="domain" description="DPCK" evidence="1">
    <location>
        <begin position="4"/>
        <end position="200"/>
    </location>
</feature>
<feature type="binding site" evidence="1">
    <location>
        <begin position="12"/>
        <end position="17"/>
    </location>
    <ligand>
        <name>ATP</name>
        <dbReference type="ChEBI" id="CHEBI:30616"/>
    </ligand>
</feature>
<keyword id="KW-0067">ATP-binding</keyword>
<keyword id="KW-0173">Coenzyme A biosynthesis</keyword>
<keyword id="KW-0963">Cytoplasm</keyword>
<keyword id="KW-0418">Kinase</keyword>
<keyword id="KW-0547">Nucleotide-binding</keyword>
<keyword id="KW-1185">Reference proteome</keyword>
<keyword id="KW-0808">Transferase</keyword>